<dbReference type="EC" id="2.7.7.-" evidence="1"/>
<dbReference type="EC" id="2.7.7.108" evidence="1"/>
<dbReference type="EMBL" id="CP000109">
    <property type="protein sequence ID" value="ABB42609.1"/>
    <property type="molecule type" value="Genomic_DNA"/>
</dbReference>
<dbReference type="SMR" id="Q31E14"/>
<dbReference type="STRING" id="317025.Tcr_2019"/>
<dbReference type="KEGG" id="tcx:Tcr_2019"/>
<dbReference type="eggNOG" id="COG0397">
    <property type="taxonomic scope" value="Bacteria"/>
</dbReference>
<dbReference type="HOGENOM" id="CLU_010245_4_0_6"/>
<dbReference type="OrthoDB" id="9776281at2"/>
<dbReference type="GO" id="GO:0070733">
    <property type="term" value="F:AMPylase activity"/>
    <property type="evidence" value="ECO:0007669"/>
    <property type="project" value="RHEA"/>
</dbReference>
<dbReference type="GO" id="GO:0005524">
    <property type="term" value="F:ATP binding"/>
    <property type="evidence" value="ECO:0007669"/>
    <property type="project" value="UniProtKB-UniRule"/>
</dbReference>
<dbReference type="GO" id="GO:0000287">
    <property type="term" value="F:magnesium ion binding"/>
    <property type="evidence" value="ECO:0007669"/>
    <property type="project" value="UniProtKB-UniRule"/>
</dbReference>
<dbReference type="HAMAP" id="MF_00692">
    <property type="entry name" value="YdiU_SelO"/>
    <property type="match status" value="1"/>
</dbReference>
<dbReference type="InterPro" id="IPR003846">
    <property type="entry name" value="SelO"/>
</dbReference>
<dbReference type="NCBIfam" id="NF000658">
    <property type="entry name" value="PRK00029.1"/>
    <property type="match status" value="1"/>
</dbReference>
<dbReference type="PANTHER" id="PTHR32057">
    <property type="entry name" value="PROTEIN ADENYLYLTRANSFERASE SELO, MITOCHONDRIAL"/>
    <property type="match status" value="1"/>
</dbReference>
<dbReference type="PANTHER" id="PTHR32057:SF14">
    <property type="entry name" value="PROTEIN ADENYLYLTRANSFERASE SELO, MITOCHONDRIAL"/>
    <property type="match status" value="1"/>
</dbReference>
<dbReference type="Pfam" id="PF02696">
    <property type="entry name" value="SelO"/>
    <property type="match status" value="1"/>
</dbReference>
<gene>
    <name evidence="1" type="primary">ydiU</name>
    <name evidence="1" type="synonym">selO</name>
    <name type="ordered locus">Tcr_2019</name>
</gene>
<name>SELO_HYDCU</name>
<protein>
    <recommendedName>
        <fullName evidence="1">Protein nucleotidyltransferase YdiU</fullName>
        <ecNumber evidence="1">2.7.7.-</ecNumber>
    </recommendedName>
    <alternativeName>
        <fullName evidence="1">Protein adenylyltransferase YdiU</fullName>
        <ecNumber evidence="1">2.7.7.108</ecNumber>
    </alternativeName>
    <alternativeName>
        <fullName evidence="1">Protein uridylyltransferase YdiU</fullName>
        <ecNumber evidence="1">2.7.7.-</ecNumber>
    </alternativeName>
</protein>
<evidence type="ECO:0000255" key="1">
    <source>
        <dbReference type="HAMAP-Rule" id="MF_00692"/>
    </source>
</evidence>
<evidence type="ECO:0000256" key="2">
    <source>
        <dbReference type="SAM" id="MobiDB-lite"/>
    </source>
</evidence>
<keyword id="KW-0067">ATP-binding</keyword>
<keyword id="KW-0460">Magnesium</keyword>
<keyword id="KW-0464">Manganese</keyword>
<keyword id="KW-0479">Metal-binding</keyword>
<keyword id="KW-0547">Nucleotide-binding</keyword>
<keyword id="KW-0548">Nucleotidyltransferase</keyword>
<keyword id="KW-0808">Transferase</keyword>
<feature type="chain" id="PRO_0000271876" description="Protein nucleotidyltransferase YdiU">
    <location>
        <begin position="1"/>
        <end position="481"/>
    </location>
</feature>
<feature type="region of interest" description="Disordered" evidence="2">
    <location>
        <begin position="458"/>
        <end position="481"/>
    </location>
</feature>
<feature type="active site" description="Proton acceptor" evidence="1">
    <location>
        <position position="248"/>
    </location>
</feature>
<feature type="binding site" evidence="1">
    <location>
        <position position="85"/>
    </location>
    <ligand>
        <name>ATP</name>
        <dbReference type="ChEBI" id="CHEBI:30616"/>
    </ligand>
</feature>
<feature type="binding site" evidence="1">
    <location>
        <position position="87"/>
    </location>
    <ligand>
        <name>ATP</name>
        <dbReference type="ChEBI" id="CHEBI:30616"/>
    </ligand>
</feature>
<feature type="binding site" evidence="1">
    <location>
        <position position="88"/>
    </location>
    <ligand>
        <name>ATP</name>
        <dbReference type="ChEBI" id="CHEBI:30616"/>
    </ligand>
</feature>
<feature type="binding site" evidence="1">
    <location>
        <position position="108"/>
    </location>
    <ligand>
        <name>ATP</name>
        <dbReference type="ChEBI" id="CHEBI:30616"/>
    </ligand>
</feature>
<feature type="binding site" evidence="1">
    <location>
        <position position="120"/>
    </location>
    <ligand>
        <name>ATP</name>
        <dbReference type="ChEBI" id="CHEBI:30616"/>
    </ligand>
</feature>
<feature type="binding site" evidence="1">
    <location>
        <position position="121"/>
    </location>
    <ligand>
        <name>ATP</name>
        <dbReference type="ChEBI" id="CHEBI:30616"/>
    </ligand>
</feature>
<feature type="binding site" evidence="1">
    <location>
        <position position="171"/>
    </location>
    <ligand>
        <name>ATP</name>
        <dbReference type="ChEBI" id="CHEBI:30616"/>
    </ligand>
</feature>
<feature type="binding site" evidence="1">
    <location>
        <position position="178"/>
    </location>
    <ligand>
        <name>ATP</name>
        <dbReference type="ChEBI" id="CHEBI:30616"/>
    </ligand>
</feature>
<feature type="binding site" evidence="1">
    <location>
        <position position="249"/>
    </location>
    <ligand>
        <name>Mg(2+)</name>
        <dbReference type="ChEBI" id="CHEBI:18420"/>
    </ligand>
</feature>
<feature type="binding site" evidence="1">
    <location>
        <position position="258"/>
    </location>
    <ligand>
        <name>ATP</name>
        <dbReference type="ChEBI" id="CHEBI:30616"/>
    </ligand>
</feature>
<feature type="binding site" evidence="1">
    <location>
        <position position="258"/>
    </location>
    <ligand>
        <name>Mg(2+)</name>
        <dbReference type="ChEBI" id="CHEBI:18420"/>
    </ligand>
</feature>
<accession>Q31E14</accession>
<sequence length="481" mass="54426">MQQSAFLELPKNFYELVLPEPQQNARLVTVNHSLMDELNCDLSDKQLLALASGNLTDESLINFNLIPLAQKYTGHQFGYYNPDLGDGRGLLLGQWHDKNNQAWEFHLKGAGRTPFSRRGDGRAVLRSVIREYLASEALHGLGVPTTRALAIASSQEQVQREIFEPRASLIRVTPTHIRFGHFEWAASLGKDALDALIAFVIQHHYPELAELPENEQAGALLKAVCGRTATLMAKWQAVGFNHGVMNSDNMSIIGETFDFGPYAFFDDFQIEYICNHSDVEGRYAYNQQPKIGVWNCQVLAAAFGQSVTEAEQTAALDHFVQTYNQQYVSEMNAKLGLATQQETDKDLIGDLLVLMDKQRVDFSLFFRRLAKLGHADENDLRRLLSQPEEFEPWFERYHQRVAQEALSEDKRQQRILNNNPSIILRNYIAQQIIEAAEVGNFQPLNDWVKALHSPFENHPGLAEFQQPPTPEQKGLQLSCSS</sequence>
<reference key="1">
    <citation type="journal article" date="2006" name="PLoS Biol.">
        <title>The genome of deep-sea vent chemolithoautotroph Thiomicrospira crunogena XCL-2.</title>
        <authorList>
            <person name="Scott K.M."/>
            <person name="Sievert S.M."/>
            <person name="Abril F.N."/>
            <person name="Ball L.A."/>
            <person name="Barrett C.J."/>
            <person name="Blake R.A."/>
            <person name="Boller A.J."/>
            <person name="Chain P.S.G."/>
            <person name="Clark J.A."/>
            <person name="Davis C.R."/>
            <person name="Detter C."/>
            <person name="Do K.F."/>
            <person name="Dobrinski K.P."/>
            <person name="Faza B.I."/>
            <person name="Fitzpatrick K.A."/>
            <person name="Freyermuth S.K."/>
            <person name="Harmer T.L."/>
            <person name="Hauser L.J."/>
            <person name="Huegler M."/>
            <person name="Kerfeld C.A."/>
            <person name="Klotz M.G."/>
            <person name="Kong W.W."/>
            <person name="Land M."/>
            <person name="Lapidus A."/>
            <person name="Larimer F.W."/>
            <person name="Longo D.L."/>
            <person name="Lucas S."/>
            <person name="Malfatti S.A."/>
            <person name="Massey S.E."/>
            <person name="Martin D.D."/>
            <person name="McCuddin Z."/>
            <person name="Meyer F."/>
            <person name="Moore J.L."/>
            <person name="Ocampo L.H. Jr."/>
            <person name="Paul J.H."/>
            <person name="Paulsen I.T."/>
            <person name="Reep D.K."/>
            <person name="Ren Q."/>
            <person name="Ross R.L."/>
            <person name="Sato P.Y."/>
            <person name="Thomas P."/>
            <person name="Tinkham L.E."/>
            <person name="Zeruth G.T."/>
        </authorList>
    </citation>
    <scope>NUCLEOTIDE SEQUENCE [LARGE SCALE GENOMIC DNA]</scope>
    <source>
        <strain>DSM 25203 / XCL-2</strain>
    </source>
</reference>
<organism>
    <name type="scientific">Hydrogenovibrio crunogenus (strain DSM 25203 / XCL-2)</name>
    <name type="common">Thiomicrospira crunogena</name>
    <dbReference type="NCBI Taxonomy" id="317025"/>
    <lineage>
        <taxon>Bacteria</taxon>
        <taxon>Pseudomonadati</taxon>
        <taxon>Pseudomonadota</taxon>
        <taxon>Gammaproteobacteria</taxon>
        <taxon>Thiotrichales</taxon>
        <taxon>Piscirickettsiaceae</taxon>
        <taxon>Hydrogenovibrio</taxon>
    </lineage>
</organism>
<proteinExistence type="inferred from homology"/>
<comment type="function">
    <text evidence="1">Nucleotidyltransferase involved in the post-translational modification of proteins. It can catalyze the addition of adenosine monophosphate (AMP) or uridine monophosphate (UMP) to a protein, resulting in modifications known as AMPylation and UMPylation.</text>
</comment>
<comment type="catalytic activity">
    <reaction evidence="1">
        <text>L-seryl-[protein] + ATP = 3-O-(5'-adenylyl)-L-seryl-[protein] + diphosphate</text>
        <dbReference type="Rhea" id="RHEA:58120"/>
        <dbReference type="Rhea" id="RHEA-COMP:9863"/>
        <dbReference type="Rhea" id="RHEA-COMP:15073"/>
        <dbReference type="ChEBI" id="CHEBI:29999"/>
        <dbReference type="ChEBI" id="CHEBI:30616"/>
        <dbReference type="ChEBI" id="CHEBI:33019"/>
        <dbReference type="ChEBI" id="CHEBI:142516"/>
        <dbReference type="EC" id="2.7.7.108"/>
    </reaction>
</comment>
<comment type="catalytic activity">
    <reaction evidence="1">
        <text>L-threonyl-[protein] + ATP = 3-O-(5'-adenylyl)-L-threonyl-[protein] + diphosphate</text>
        <dbReference type="Rhea" id="RHEA:54292"/>
        <dbReference type="Rhea" id="RHEA-COMP:11060"/>
        <dbReference type="Rhea" id="RHEA-COMP:13847"/>
        <dbReference type="ChEBI" id="CHEBI:30013"/>
        <dbReference type="ChEBI" id="CHEBI:30616"/>
        <dbReference type="ChEBI" id="CHEBI:33019"/>
        <dbReference type="ChEBI" id="CHEBI:138113"/>
        <dbReference type="EC" id="2.7.7.108"/>
    </reaction>
</comment>
<comment type="catalytic activity">
    <reaction evidence="1">
        <text>L-tyrosyl-[protein] + ATP = O-(5'-adenylyl)-L-tyrosyl-[protein] + diphosphate</text>
        <dbReference type="Rhea" id="RHEA:54288"/>
        <dbReference type="Rhea" id="RHEA-COMP:10136"/>
        <dbReference type="Rhea" id="RHEA-COMP:13846"/>
        <dbReference type="ChEBI" id="CHEBI:30616"/>
        <dbReference type="ChEBI" id="CHEBI:33019"/>
        <dbReference type="ChEBI" id="CHEBI:46858"/>
        <dbReference type="ChEBI" id="CHEBI:83624"/>
        <dbReference type="EC" id="2.7.7.108"/>
    </reaction>
</comment>
<comment type="catalytic activity">
    <reaction evidence="1">
        <text>L-histidyl-[protein] + UTP = N(tele)-(5'-uridylyl)-L-histidyl-[protein] + diphosphate</text>
        <dbReference type="Rhea" id="RHEA:83891"/>
        <dbReference type="Rhea" id="RHEA-COMP:9745"/>
        <dbReference type="Rhea" id="RHEA-COMP:20239"/>
        <dbReference type="ChEBI" id="CHEBI:29979"/>
        <dbReference type="ChEBI" id="CHEBI:33019"/>
        <dbReference type="ChEBI" id="CHEBI:46398"/>
        <dbReference type="ChEBI" id="CHEBI:233474"/>
    </reaction>
</comment>
<comment type="catalytic activity">
    <reaction evidence="1">
        <text>L-seryl-[protein] + UTP = O-(5'-uridylyl)-L-seryl-[protein] + diphosphate</text>
        <dbReference type="Rhea" id="RHEA:64604"/>
        <dbReference type="Rhea" id="RHEA-COMP:9863"/>
        <dbReference type="Rhea" id="RHEA-COMP:16635"/>
        <dbReference type="ChEBI" id="CHEBI:29999"/>
        <dbReference type="ChEBI" id="CHEBI:33019"/>
        <dbReference type="ChEBI" id="CHEBI:46398"/>
        <dbReference type="ChEBI" id="CHEBI:156051"/>
    </reaction>
</comment>
<comment type="catalytic activity">
    <reaction evidence="1">
        <text>L-tyrosyl-[protein] + UTP = O-(5'-uridylyl)-L-tyrosyl-[protein] + diphosphate</text>
        <dbReference type="Rhea" id="RHEA:83887"/>
        <dbReference type="Rhea" id="RHEA-COMP:10136"/>
        <dbReference type="Rhea" id="RHEA-COMP:20238"/>
        <dbReference type="ChEBI" id="CHEBI:33019"/>
        <dbReference type="ChEBI" id="CHEBI:46398"/>
        <dbReference type="ChEBI" id="CHEBI:46858"/>
        <dbReference type="ChEBI" id="CHEBI:90602"/>
    </reaction>
</comment>
<comment type="cofactor">
    <cofactor evidence="1">
        <name>Mg(2+)</name>
        <dbReference type="ChEBI" id="CHEBI:18420"/>
    </cofactor>
    <cofactor evidence="1">
        <name>Mn(2+)</name>
        <dbReference type="ChEBI" id="CHEBI:29035"/>
    </cofactor>
</comment>
<comment type="similarity">
    <text evidence="1">Belongs to the SELO family.</text>
</comment>